<proteinExistence type="inferred from homology"/>
<feature type="chain" id="PRO_0000385654" description="Putative ammonium transporter 1 member 5">
    <location>
        <begin position="1"/>
        <end position="496"/>
    </location>
</feature>
<feature type="transmembrane region" description="Helical" evidence="3">
    <location>
        <begin position="50"/>
        <end position="70"/>
    </location>
</feature>
<feature type="transmembrane region" description="Helical" evidence="3">
    <location>
        <begin position="85"/>
        <end position="105"/>
    </location>
</feature>
<feature type="transmembrane region" description="Helical" evidence="3">
    <location>
        <begin position="131"/>
        <end position="151"/>
    </location>
</feature>
<feature type="transmembrane region" description="Helical" evidence="3">
    <location>
        <begin position="156"/>
        <end position="176"/>
    </location>
</feature>
<feature type="transmembrane region" description="Helical" evidence="3">
    <location>
        <begin position="202"/>
        <end position="222"/>
    </location>
</feature>
<feature type="transmembrane region" description="Helical" evidence="3">
    <location>
        <begin position="246"/>
        <end position="266"/>
    </location>
</feature>
<feature type="transmembrane region" description="Helical" evidence="3">
    <location>
        <begin position="284"/>
        <end position="306"/>
    </location>
</feature>
<feature type="transmembrane region" description="Helical" evidence="3">
    <location>
        <begin position="314"/>
        <end position="334"/>
    </location>
</feature>
<feature type="transmembrane region" description="Helical" evidence="3">
    <location>
        <begin position="336"/>
        <end position="356"/>
    </location>
</feature>
<feature type="transmembrane region" description="Helical" evidence="3">
    <location>
        <begin position="369"/>
        <end position="389"/>
    </location>
</feature>
<feature type="transmembrane region" description="Helical" evidence="3">
    <location>
        <begin position="422"/>
        <end position="442"/>
    </location>
</feature>
<feature type="modified residue" description="Phosphoserine" evidence="2">
    <location>
        <position position="485"/>
    </location>
</feature>
<gene>
    <name type="primary">AMT1-5</name>
    <name type="ordered locus">At3g24290</name>
    <name type="ORF">K7M2.6</name>
</gene>
<organism>
    <name type="scientific">Arabidopsis thaliana</name>
    <name type="common">Mouse-ear cress</name>
    <dbReference type="NCBI Taxonomy" id="3702"/>
    <lineage>
        <taxon>Eukaryota</taxon>
        <taxon>Viridiplantae</taxon>
        <taxon>Streptophyta</taxon>
        <taxon>Embryophyta</taxon>
        <taxon>Tracheophyta</taxon>
        <taxon>Spermatophyta</taxon>
        <taxon>Magnoliopsida</taxon>
        <taxon>eudicotyledons</taxon>
        <taxon>Gunneridae</taxon>
        <taxon>Pentapetalae</taxon>
        <taxon>rosids</taxon>
        <taxon>malvids</taxon>
        <taxon>Brassicales</taxon>
        <taxon>Brassicaceae</taxon>
        <taxon>Camelineae</taxon>
        <taxon>Arabidopsis</taxon>
    </lineage>
</organism>
<name>AMT15_ARATH</name>
<evidence type="ECO:0000250" key="1"/>
<evidence type="ECO:0000250" key="2">
    <source>
        <dbReference type="UniProtKB" id="P54144"/>
    </source>
</evidence>
<evidence type="ECO:0000255" key="3"/>
<evidence type="ECO:0000305" key="4"/>
<protein>
    <recommendedName>
        <fullName>Putative ammonium transporter 1 member 5</fullName>
        <shortName>AtAMT1;5</shortName>
    </recommendedName>
</protein>
<reference key="1">
    <citation type="journal article" date="2000" name="DNA Res.">
        <title>Structural analysis of Arabidopsis thaliana chromosome 3. II. Sequence features of the 4,251,695 bp regions covered by 90 P1, TAC and BAC clones.</title>
        <authorList>
            <person name="Kaneko T."/>
            <person name="Katoh T."/>
            <person name="Sato S."/>
            <person name="Nakamura Y."/>
            <person name="Asamizu E."/>
            <person name="Tabata S."/>
        </authorList>
    </citation>
    <scope>NUCLEOTIDE SEQUENCE [LARGE SCALE GENOMIC DNA]</scope>
    <source>
        <strain>cv. Columbia</strain>
    </source>
</reference>
<reference key="2">
    <citation type="journal article" date="2017" name="Plant J.">
        <title>Araport11: a complete reannotation of the Arabidopsis thaliana reference genome.</title>
        <authorList>
            <person name="Cheng C.Y."/>
            <person name="Krishnakumar V."/>
            <person name="Chan A.P."/>
            <person name="Thibaud-Nissen F."/>
            <person name="Schobel S."/>
            <person name="Town C.D."/>
        </authorList>
    </citation>
    <scope>GENOME REANNOTATION</scope>
    <source>
        <strain>cv. Columbia</strain>
    </source>
</reference>
<comment type="function">
    <text evidence="1">Involved in ammonium transport.</text>
</comment>
<comment type="subcellular location">
    <subcellularLocation>
        <location evidence="4">Membrane</location>
        <topology evidence="4">Multi-pass membrane protein</topology>
    </subcellularLocation>
</comment>
<comment type="similarity">
    <text evidence="4">Belongs to the ammonia transporter channel (TC 1.A.11.2) family.</text>
</comment>
<keyword id="KW-0924">Ammonia transport</keyword>
<keyword id="KW-0472">Membrane</keyword>
<keyword id="KW-0597">Phosphoprotein</keyword>
<keyword id="KW-1185">Reference proteome</keyword>
<keyword id="KW-0812">Transmembrane</keyword>
<keyword id="KW-1133">Transmembrane helix</keyword>
<keyword id="KW-0813">Transport</keyword>
<dbReference type="EMBL" id="AP000382">
    <property type="protein sequence ID" value="BAB02928.1"/>
    <property type="molecule type" value="Genomic_DNA"/>
</dbReference>
<dbReference type="EMBL" id="CP002686">
    <property type="protein sequence ID" value="AEE76885.1"/>
    <property type="molecule type" value="Genomic_DNA"/>
</dbReference>
<dbReference type="SMR" id="Q9LK16"/>
<dbReference type="BioGRID" id="7349">
    <property type="interactions" value="1"/>
</dbReference>
<dbReference type="FunCoup" id="Q9LK16">
    <property type="interactions" value="16"/>
</dbReference>
<dbReference type="STRING" id="3702.Q9LK16"/>
<dbReference type="PaxDb" id="3702-AT3G24290.1"/>
<dbReference type="ProteomicsDB" id="244480"/>
<dbReference type="EnsemblPlants" id="AT3G24290.1">
    <property type="protein sequence ID" value="AT3G24290.1"/>
    <property type="gene ID" value="AT3G24290"/>
</dbReference>
<dbReference type="Gramene" id="AT3G24290.1">
    <property type="protein sequence ID" value="AT3G24290.1"/>
    <property type="gene ID" value="AT3G24290"/>
</dbReference>
<dbReference type="KEGG" id="ath:AT3G24290"/>
<dbReference type="Araport" id="AT3G24290"/>
<dbReference type="TAIR" id="AT3G24290">
    <property type="gene designation" value="AMT1"/>
</dbReference>
<dbReference type="eggNOG" id="KOG0682">
    <property type="taxonomic scope" value="Eukaryota"/>
</dbReference>
<dbReference type="HOGENOM" id="CLU_000445_33_1_1"/>
<dbReference type="InParanoid" id="Q9LK16"/>
<dbReference type="OMA" id="VVWVLMD"/>
<dbReference type="OrthoDB" id="534912at2759"/>
<dbReference type="PhylomeDB" id="Q9LK16"/>
<dbReference type="PRO" id="PR:Q9LK16"/>
<dbReference type="Proteomes" id="UP000006548">
    <property type="component" value="Chromosome 3"/>
</dbReference>
<dbReference type="ExpressionAtlas" id="Q9LK16">
    <property type="expression patterns" value="baseline"/>
</dbReference>
<dbReference type="GO" id="GO:0016020">
    <property type="term" value="C:membrane"/>
    <property type="evidence" value="ECO:0007669"/>
    <property type="project" value="UniProtKB-SubCell"/>
</dbReference>
<dbReference type="GO" id="GO:0008519">
    <property type="term" value="F:ammonium channel activity"/>
    <property type="evidence" value="ECO:0000314"/>
    <property type="project" value="TAIR"/>
</dbReference>
<dbReference type="FunFam" id="1.10.3430.10:FF:000006">
    <property type="entry name" value="Ammonium transporter"/>
    <property type="match status" value="1"/>
</dbReference>
<dbReference type="Gene3D" id="1.10.3430.10">
    <property type="entry name" value="Ammonium transporter AmtB like domains"/>
    <property type="match status" value="1"/>
</dbReference>
<dbReference type="InterPro" id="IPR029020">
    <property type="entry name" value="Ammonium/urea_transptr"/>
</dbReference>
<dbReference type="InterPro" id="IPR001905">
    <property type="entry name" value="Ammonium_transpt"/>
</dbReference>
<dbReference type="InterPro" id="IPR018047">
    <property type="entry name" value="Ammonium_transpt_CS"/>
</dbReference>
<dbReference type="InterPro" id="IPR024041">
    <property type="entry name" value="NH4_transpt_AmtB-like_dom"/>
</dbReference>
<dbReference type="NCBIfam" id="TIGR00836">
    <property type="entry name" value="amt"/>
    <property type="match status" value="1"/>
</dbReference>
<dbReference type="PANTHER" id="PTHR11730">
    <property type="entry name" value="AMMONIUM TRANSPORTER"/>
    <property type="match status" value="1"/>
</dbReference>
<dbReference type="PANTHER" id="PTHR11730:SF102">
    <property type="entry name" value="AMMONIUM TRANSPORTER 1 MEMBER 5-RELATED"/>
    <property type="match status" value="1"/>
</dbReference>
<dbReference type="Pfam" id="PF00909">
    <property type="entry name" value="Ammonium_transp"/>
    <property type="match status" value="1"/>
</dbReference>
<dbReference type="SUPFAM" id="SSF111352">
    <property type="entry name" value="Ammonium transporter"/>
    <property type="match status" value="1"/>
</dbReference>
<dbReference type="PROSITE" id="PS01219">
    <property type="entry name" value="AMMONIUM_TRANSP"/>
    <property type="match status" value="1"/>
</dbReference>
<accession>Q9LK16</accession>
<sequence>MSGAITCSAADLSALLGPNATAAADYICGQLGSVNNKFTDAAYAIDNTYLLFSAYLVFAMQLGFAMLCAGSVRAKNTMNIMLTNVLDAAAGGLFYYLFGYAFAFGESSDGFIGRHNFGLQNFPTLTSDYSFFLYQWAFAIAAAGITSGSIAERTKFVAYLIYSSFLTGFVYPVVSHWFWSPDGWASPFRSEDRLFGTGAIDFAGSGVVHMVGGIAGLWGALIEGPRIGRFPDGGHAIALRGHSASLVVLGTFLLWFGWYGFNPGSFTKILIPYNSGSNYGQWSGIGRTAVTTTLSGCTAALTTLFGKRLLSGHWNVTDVCNGLLGGFAAITAGCSVVDPWAAIVCGFVASLVLIGCNKLAELLKYDDPLEAAQLHGGCGAWGLIFVGLFAKEKYINEVYGASPGRHYGLFMGGGGKLLGAQLVQIIVIVGWVSATMGTLFFILKKLNLLRISEQHEMRGMDLAGHGGFAYIYHDNDDDSIGVPGSPVPRAPNPPAV</sequence>